<keyword id="KW-1185">Reference proteome</keyword>
<organism>
    <name type="scientific">Staphylococcus saprophyticus subsp. saprophyticus (strain ATCC 15305 / DSM 20229 / NCIMB 8711 / NCTC 7292 / S-41)</name>
    <dbReference type="NCBI Taxonomy" id="342451"/>
    <lineage>
        <taxon>Bacteria</taxon>
        <taxon>Bacillati</taxon>
        <taxon>Bacillota</taxon>
        <taxon>Bacilli</taxon>
        <taxon>Bacillales</taxon>
        <taxon>Staphylococcaceae</taxon>
        <taxon>Staphylococcus</taxon>
    </lineage>
</organism>
<protein>
    <recommendedName>
        <fullName>UPF0457 protein SSP0714</fullName>
    </recommendedName>
</protein>
<feature type="chain" id="PRO_0000294509" description="UPF0457 protein SSP0714">
    <location>
        <begin position="1"/>
        <end position="86"/>
    </location>
</feature>
<name>Y714_STAS1</name>
<comment type="similarity">
    <text evidence="1">Belongs to the UPF0457 family.</text>
</comment>
<sequence length="86" mass="10090">MAMTVKKDNNEVRIQWRVADIKIPTSEIKNISQDQNIHEVPKLDRDKVSRIGSTFGKTNRVIIDTDDHEYIIYTQNDQKVYNEVTK</sequence>
<gene>
    <name type="ordered locus">SSP0714</name>
</gene>
<evidence type="ECO:0000305" key="1"/>
<proteinExistence type="inferred from homology"/>
<accession>Q49ZB7</accession>
<reference key="1">
    <citation type="journal article" date="2005" name="Proc. Natl. Acad. Sci. U.S.A.">
        <title>Whole genome sequence of Staphylococcus saprophyticus reveals the pathogenesis of uncomplicated urinary tract infection.</title>
        <authorList>
            <person name="Kuroda M."/>
            <person name="Yamashita A."/>
            <person name="Hirakawa H."/>
            <person name="Kumano M."/>
            <person name="Morikawa K."/>
            <person name="Higashide M."/>
            <person name="Maruyama A."/>
            <person name="Inose Y."/>
            <person name="Matoba K."/>
            <person name="Toh H."/>
            <person name="Kuhara S."/>
            <person name="Hattori M."/>
            <person name="Ohta T."/>
        </authorList>
    </citation>
    <scope>NUCLEOTIDE SEQUENCE [LARGE SCALE GENOMIC DNA]</scope>
    <source>
        <strain>ATCC 15305 / DSM 20229 / NCIMB 8711 / NCTC 7292 / S-41</strain>
    </source>
</reference>
<dbReference type="EMBL" id="AP008934">
    <property type="protein sequence ID" value="BAE17859.1"/>
    <property type="molecule type" value="Genomic_DNA"/>
</dbReference>
<dbReference type="RefSeq" id="WP_002482662.1">
    <property type="nucleotide sequence ID" value="NZ_MTGA01000036.1"/>
</dbReference>
<dbReference type="SMR" id="Q49ZB7"/>
<dbReference type="KEGG" id="ssp:SSP0714"/>
<dbReference type="eggNOG" id="ENOG50332PH">
    <property type="taxonomic scope" value="Bacteria"/>
</dbReference>
<dbReference type="HOGENOM" id="CLU_174851_0_0_9"/>
<dbReference type="OrthoDB" id="2397384at2"/>
<dbReference type="Proteomes" id="UP000006371">
    <property type="component" value="Chromosome"/>
</dbReference>
<dbReference type="InterPro" id="IPR055365">
    <property type="entry name" value="PH_SunI-like"/>
</dbReference>
<dbReference type="Pfam" id="PF23491">
    <property type="entry name" value="bPH_8"/>
    <property type="match status" value="1"/>
</dbReference>